<comment type="function">
    <text evidence="1">One of the early assembly proteins it binds 23S rRNA. One of the proteins that surrounds the polypeptide exit tunnel on the outside of the ribosome. Forms the main docking site for trigger factor binding to the ribosome.</text>
</comment>
<comment type="subunit">
    <text evidence="1">Part of the 50S ribosomal subunit. Contacts protein L29, and trigger factor when it is bound to the ribosome.</text>
</comment>
<comment type="similarity">
    <text evidence="1">Belongs to the universal ribosomal protein uL23 family.</text>
</comment>
<evidence type="ECO:0000255" key="1">
    <source>
        <dbReference type="HAMAP-Rule" id="MF_01369"/>
    </source>
</evidence>
<evidence type="ECO:0000305" key="2"/>
<protein>
    <recommendedName>
        <fullName evidence="1">Large ribosomal subunit protein uL23</fullName>
    </recommendedName>
    <alternativeName>
        <fullName evidence="2">50S ribosomal protein L23</fullName>
    </alternativeName>
</protein>
<sequence length="96" mass="11114">MRDPRDIIKRPVITERSMEMMAEKKYTFDVDVKSNKTEVKDALEAIFGVKVEKVNIMNYKPKAKRVGRHAGFTSRRRKAIVKLTADSKEIEIFQGV</sequence>
<organism>
    <name type="scientific">Bacillus cereus (strain G9842)</name>
    <dbReference type="NCBI Taxonomy" id="405531"/>
    <lineage>
        <taxon>Bacteria</taxon>
        <taxon>Bacillati</taxon>
        <taxon>Bacillota</taxon>
        <taxon>Bacilli</taxon>
        <taxon>Bacillales</taxon>
        <taxon>Bacillaceae</taxon>
        <taxon>Bacillus</taxon>
        <taxon>Bacillus cereus group</taxon>
    </lineage>
</organism>
<reference key="1">
    <citation type="submission" date="2008-10" db="EMBL/GenBank/DDBJ databases">
        <title>Genome sequence of Bacillus cereus G9842.</title>
        <authorList>
            <person name="Dodson R.J."/>
            <person name="Durkin A.S."/>
            <person name="Rosovitz M.J."/>
            <person name="Rasko D.A."/>
            <person name="Hoffmaster A."/>
            <person name="Ravel J."/>
            <person name="Sutton G."/>
        </authorList>
    </citation>
    <scope>NUCLEOTIDE SEQUENCE [LARGE SCALE GENOMIC DNA]</scope>
    <source>
        <strain>G9842</strain>
    </source>
</reference>
<accession>B7IT21</accession>
<keyword id="KW-0687">Ribonucleoprotein</keyword>
<keyword id="KW-0689">Ribosomal protein</keyword>
<keyword id="KW-0694">RNA-binding</keyword>
<keyword id="KW-0699">rRNA-binding</keyword>
<name>RL23_BACC2</name>
<gene>
    <name evidence="1" type="primary">rplW</name>
    <name type="ordered locus">BCG9842_B5193</name>
</gene>
<dbReference type="EMBL" id="CP001186">
    <property type="protein sequence ID" value="ACK98283.1"/>
    <property type="molecule type" value="Genomic_DNA"/>
</dbReference>
<dbReference type="RefSeq" id="WP_001205558.1">
    <property type="nucleotide sequence ID" value="NC_011772.1"/>
</dbReference>
<dbReference type="SMR" id="B7IT21"/>
<dbReference type="GeneID" id="93010941"/>
<dbReference type="KEGG" id="bcg:BCG9842_B5193"/>
<dbReference type="HOGENOM" id="CLU_037562_3_2_9"/>
<dbReference type="Proteomes" id="UP000006744">
    <property type="component" value="Chromosome"/>
</dbReference>
<dbReference type="GO" id="GO:1990904">
    <property type="term" value="C:ribonucleoprotein complex"/>
    <property type="evidence" value="ECO:0007669"/>
    <property type="project" value="UniProtKB-KW"/>
</dbReference>
<dbReference type="GO" id="GO:0005840">
    <property type="term" value="C:ribosome"/>
    <property type="evidence" value="ECO:0007669"/>
    <property type="project" value="UniProtKB-KW"/>
</dbReference>
<dbReference type="GO" id="GO:0019843">
    <property type="term" value="F:rRNA binding"/>
    <property type="evidence" value="ECO:0007669"/>
    <property type="project" value="UniProtKB-UniRule"/>
</dbReference>
<dbReference type="GO" id="GO:0003735">
    <property type="term" value="F:structural constituent of ribosome"/>
    <property type="evidence" value="ECO:0007669"/>
    <property type="project" value="InterPro"/>
</dbReference>
<dbReference type="GO" id="GO:0006412">
    <property type="term" value="P:translation"/>
    <property type="evidence" value="ECO:0007669"/>
    <property type="project" value="UniProtKB-UniRule"/>
</dbReference>
<dbReference type="FunFam" id="3.30.70.330:FF:000001">
    <property type="entry name" value="50S ribosomal protein L23"/>
    <property type="match status" value="1"/>
</dbReference>
<dbReference type="Gene3D" id="3.30.70.330">
    <property type="match status" value="1"/>
</dbReference>
<dbReference type="HAMAP" id="MF_01369_B">
    <property type="entry name" value="Ribosomal_uL23_B"/>
    <property type="match status" value="1"/>
</dbReference>
<dbReference type="InterPro" id="IPR012677">
    <property type="entry name" value="Nucleotide-bd_a/b_plait_sf"/>
</dbReference>
<dbReference type="InterPro" id="IPR013025">
    <property type="entry name" value="Ribosomal_uL23-like"/>
</dbReference>
<dbReference type="InterPro" id="IPR012678">
    <property type="entry name" value="Ribosomal_uL23/eL15/eS24_sf"/>
</dbReference>
<dbReference type="InterPro" id="IPR001014">
    <property type="entry name" value="Ribosomal_uL23_CS"/>
</dbReference>
<dbReference type="NCBIfam" id="NF004363">
    <property type="entry name" value="PRK05738.2-4"/>
    <property type="match status" value="1"/>
</dbReference>
<dbReference type="PANTHER" id="PTHR11620">
    <property type="entry name" value="60S RIBOSOMAL PROTEIN L23A"/>
    <property type="match status" value="1"/>
</dbReference>
<dbReference type="Pfam" id="PF00276">
    <property type="entry name" value="Ribosomal_L23"/>
    <property type="match status" value="1"/>
</dbReference>
<dbReference type="SUPFAM" id="SSF54189">
    <property type="entry name" value="Ribosomal proteins S24e, L23 and L15e"/>
    <property type="match status" value="1"/>
</dbReference>
<dbReference type="PROSITE" id="PS00050">
    <property type="entry name" value="RIBOSOMAL_L23"/>
    <property type="match status" value="1"/>
</dbReference>
<proteinExistence type="inferred from homology"/>
<feature type="chain" id="PRO_1000144529" description="Large ribosomal subunit protein uL23">
    <location>
        <begin position="1"/>
        <end position="96"/>
    </location>
</feature>